<feature type="chain" id="PRO_0000376861" description="Transcription factor Sox-10">
    <location>
        <begin position="1"/>
        <end position="446"/>
    </location>
</feature>
<feature type="DNA-binding region" description="HMG box" evidence="3">
    <location>
        <begin position="98"/>
        <end position="166"/>
    </location>
</feature>
<feature type="region of interest" description="Disordered" evidence="4">
    <location>
        <begin position="1"/>
        <end position="60"/>
    </location>
</feature>
<feature type="region of interest" description="Dimerization (DIM)" evidence="2">
    <location>
        <begin position="56"/>
        <end position="96"/>
    </location>
</feature>
<feature type="region of interest" description="Disordered" evidence="4">
    <location>
        <begin position="153"/>
        <end position="191"/>
    </location>
</feature>
<feature type="region of interest" description="Disordered" evidence="4">
    <location>
        <begin position="203"/>
        <end position="264"/>
    </location>
</feature>
<feature type="region of interest" description="Transactivation domain (TAM)" evidence="2">
    <location>
        <begin position="217"/>
        <end position="303"/>
    </location>
</feature>
<feature type="region of interest" description="Transactivation domain (TAC)" evidence="2">
    <location>
        <begin position="337"/>
        <end position="446"/>
    </location>
</feature>
<feature type="region of interest" description="Disordered" evidence="4">
    <location>
        <begin position="421"/>
        <end position="446"/>
    </location>
</feature>
<feature type="compositionally biased region" description="Acidic residues" evidence="4">
    <location>
        <begin position="36"/>
        <end position="48"/>
    </location>
</feature>
<feature type="compositionally biased region" description="Basic and acidic residues" evidence="4">
    <location>
        <begin position="153"/>
        <end position="167"/>
    </location>
</feature>
<feature type="compositionally biased region" description="Polar residues" evidence="4">
    <location>
        <begin position="213"/>
        <end position="226"/>
    </location>
</feature>
<feature type="compositionally biased region" description="Basic and acidic residues" evidence="4">
    <location>
        <begin position="243"/>
        <end position="257"/>
    </location>
</feature>
<feature type="compositionally biased region" description="Polar residues" evidence="4">
    <location>
        <begin position="426"/>
        <end position="446"/>
    </location>
</feature>
<feature type="cross-link" description="Glycyl lysine isopeptide (Lys-Gly) (interchain with G-Cter in SUMO)" evidence="7">
    <location>
        <position position="52"/>
    </location>
</feature>
<feature type="cross-link" description="Glycyl lysine isopeptide (Lys-Gly) (interchain with G-Cter in SUMO)" evidence="7">
    <location>
        <position position="341"/>
    </location>
</feature>
<feature type="mutagenesis site" description="Eliminates one of two sumoylated products. Abolishes interaction with sumoylation factors." evidence="7">
    <original>K</original>
    <variation>R</variation>
    <location>
        <position position="52"/>
    </location>
</feature>
<feature type="mutagenesis site" description="Eliminates one of two sumoylated products." evidence="7">
    <original>K</original>
    <variation>R</variation>
    <location>
        <position position="341"/>
    </location>
</feature>
<feature type="sequence conflict" description="In Ref. 3; AAI70062." evidence="9" ref="3">
    <original>D</original>
    <variation>DDD</variation>
    <location>
        <position position="36"/>
    </location>
</feature>
<accession>Q8AXX8</accession>
<accession>B7ZR69</accession>
<proteinExistence type="evidence at protein level"/>
<reference evidence="9 11" key="1">
    <citation type="journal article" date="2003" name="Dev. Biol.">
        <title>Sox10 regulates the development of neural crest-derived melanocytes in Xenopus.</title>
        <authorList>
            <person name="Aoki Y."/>
            <person name="Saint-Germain N."/>
            <person name="Gyda M."/>
            <person name="Magner-Fink E."/>
            <person name="Lee Y.-H."/>
            <person name="Credidio C."/>
            <person name="Saint-Jeannet J.-P."/>
        </authorList>
    </citation>
    <scope>NUCLEOTIDE SEQUENCE [MRNA]</scope>
    <scope>FUNCTION</scope>
    <scope>TISSUE SPECIFICITY</scope>
    <scope>INDUCTION</scope>
    <source>
        <tissue evidence="5">Neurula</tissue>
    </source>
</reference>
<reference evidence="9 12" key="2">
    <citation type="journal article" date="2003" name="Dev. Biol.">
        <title>Sox10 is required for the early development of the prospective neural crest in Xenopus embryos.</title>
        <authorList>
            <person name="Honore S.M."/>
            <person name="Aybar M.J."/>
            <person name="Mayor R."/>
        </authorList>
    </citation>
    <scope>NUCLEOTIDE SEQUENCE [MRNA]</scope>
    <scope>FUNCTION</scope>
    <scope>TISSUE SPECIFICITY</scope>
    <scope>INDUCTION</scope>
    <scope>DISRUPTION PHENOTYPE</scope>
    <source>
        <tissue evidence="6">Tail bud</tissue>
    </source>
</reference>
<reference evidence="10" key="3">
    <citation type="submission" date="2008-11" db="EMBL/GenBank/DDBJ databases">
        <authorList>
            <consortium name="NIH - Xenopus Gene Collection (XGC) project"/>
        </authorList>
    </citation>
    <scope>NUCLEOTIDE SEQUENCE [LARGE SCALE MRNA]</scope>
    <source>
        <tissue evidence="10">Gastrula</tissue>
    </source>
</reference>
<reference evidence="9" key="4">
    <citation type="journal article" date="2005" name="Dev. Cell">
        <title>SoxE factors function equivalently during neural crest and inner ear development and their activity is regulated by SUMOylation.</title>
        <authorList>
            <person name="Taylor K.M."/>
            <person name="Labonne C."/>
        </authorList>
    </citation>
    <scope>FUNCTION</scope>
    <scope>INTERACTION WITH UBE2I AND SMO1</scope>
    <scope>SUMOYLATION AT LYS-52 AND LYS-341</scope>
    <scope>MUTAGENESIS OF LYS-52 AND LYS-341</scope>
</reference>
<reference evidence="9" key="5">
    <citation type="journal article" date="2006" name="Development">
        <title>Functional analysis of Sox8 during neural crest development in Xenopus.</title>
        <authorList>
            <person name="O'Donnell M."/>
            <person name="Hong C.-S."/>
            <person name="Huang X."/>
            <person name="Delnicki R.J."/>
            <person name="Saint-Jeannet J.-P."/>
        </authorList>
    </citation>
    <scope>INDUCTION</scope>
</reference>
<organism>
    <name type="scientific">Xenopus laevis</name>
    <name type="common">African clawed frog</name>
    <dbReference type="NCBI Taxonomy" id="8355"/>
    <lineage>
        <taxon>Eukaryota</taxon>
        <taxon>Metazoa</taxon>
        <taxon>Chordata</taxon>
        <taxon>Craniata</taxon>
        <taxon>Vertebrata</taxon>
        <taxon>Euteleostomi</taxon>
        <taxon>Amphibia</taxon>
        <taxon>Batrachia</taxon>
        <taxon>Anura</taxon>
        <taxon>Pipoidea</taxon>
        <taxon>Pipidae</taxon>
        <taxon>Xenopodinae</taxon>
        <taxon>Xenopus</taxon>
        <taxon>Xenopus</taxon>
    </lineage>
</organism>
<dbReference type="EMBL" id="AY149116">
    <property type="protein sequence ID" value="AAN62483.1"/>
    <property type="molecule type" value="mRNA"/>
</dbReference>
<dbReference type="EMBL" id="AY157667">
    <property type="protein sequence ID" value="AAO13216.1"/>
    <property type="molecule type" value="mRNA"/>
</dbReference>
<dbReference type="EMBL" id="BC170062">
    <property type="protein sequence ID" value="AAI70062.1"/>
    <property type="molecule type" value="mRNA"/>
</dbReference>
<dbReference type="RefSeq" id="NP_001082358.1">
    <property type="nucleotide sequence ID" value="NM_001088889.1"/>
</dbReference>
<dbReference type="RefSeq" id="XP_018112033.1">
    <property type="nucleotide sequence ID" value="XM_018256544.1"/>
</dbReference>
<dbReference type="SMR" id="Q8AXX8"/>
<dbReference type="GeneID" id="398422"/>
<dbReference type="KEGG" id="xla:398422"/>
<dbReference type="AGR" id="Xenbase:XB-GENE-865362"/>
<dbReference type="CTD" id="398422"/>
<dbReference type="Xenbase" id="XB-GENE-865362">
    <property type="gene designation" value="sox10.L"/>
</dbReference>
<dbReference type="OMA" id="ATIQAHY"/>
<dbReference type="OrthoDB" id="6247875at2759"/>
<dbReference type="Proteomes" id="UP000186698">
    <property type="component" value="Chromosome 4L"/>
</dbReference>
<dbReference type="Bgee" id="398422">
    <property type="expression patterns" value="Expressed in internal ear and 10 other cell types or tissues"/>
</dbReference>
<dbReference type="GO" id="GO:0005737">
    <property type="term" value="C:cytoplasm"/>
    <property type="evidence" value="ECO:0007669"/>
    <property type="project" value="UniProtKB-SubCell"/>
</dbReference>
<dbReference type="GO" id="GO:0005634">
    <property type="term" value="C:nucleus"/>
    <property type="evidence" value="ECO:0000318"/>
    <property type="project" value="GO_Central"/>
</dbReference>
<dbReference type="GO" id="GO:0003677">
    <property type="term" value="F:DNA binding"/>
    <property type="evidence" value="ECO:0000250"/>
    <property type="project" value="UniProtKB"/>
</dbReference>
<dbReference type="GO" id="GO:0003700">
    <property type="term" value="F:DNA-binding transcription factor activity"/>
    <property type="evidence" value="ECO:0000250"/>
    <property type="project" value="UniProtKB"/>
</dbReference>
<dbReference type="GO" id="GO:0000981">
    <property type="term" value="F:DNA-binding transcription factor activity, RNA polymerase II-specific"/>
    <property type="evidence" value="ECO:0000318"/>
    <property type="project" value="GO_Central"/>
</dbReference>
<dbReference type="GO" id="GO:0019899">
    <property type="term" value="F:enzyme binding"/>
    <property type="evidence" value="ECO:0000353"/>
    <property type="project" value="UniProtKB"/>
</dbReference>
<dbReference type="GO" id="GO:0000978">
    <property type="term" value="F:RNA polymerase II cis-regulatory region sequence-specific DNA binding"/>
    <property type="evidence" value="ECO:0000318"/>
    <property type="project" value="GO_Central"/>
</dbReference>
<dbReference type="GO" id="GO:0022010">
    <property type="term" value="P:central nervous system myelination"/>
    <property type="evidence" value="ECO:0000250"/>
    <property type="project" value="UniProtKB"/>
</dbReference>
<dbReference type="GO" id="GO:0048484">
    <property type="term" value="P:enteric nervous system development"/>
    <property type="evidence" value="ECO:0000318"/>
    <property type="project" value="GO_Central"/>
</dbReference>
<dbReference type="GO" id="GO:0030318">
    <property type="term" value="P:melanocyte differentiation"/>
    <property type="evidence" value="ECO:0000315"/>
    <property type="project" value="UniProtKB"/>
</dbReference>
<dbReference type="GO" id="GO:0002009">
    <property type="term" value="P:morphogenesis of an epithelium"/>
    <property type="evidence" value="ECO:0000318"/>
    <property type="project" value="GO_Central"/>
</dbReference>
<dbReference type="GO" id="GO:0000122">
    <property type="term" value="P:negative regulation of transcription by RNA polymerase II"/>
    <property type="evidence" value="ECO:0000318"/>
    <property type="project" value="GO_Central"/>
</dbReference>
<dbReference type="GO" id="GO:0001755">
    <property type="term" value="P:neural crest cell migration"/>
    <property type="evidence" value="ECO:0000318"/>
    <property type="project" value="GO_Central"/>
</dbReference>
<dbReference type="GO" id="GO:0014029">
    <property type="term" value="P:neural crest formation"/>
    <property type="evidence" value="ECO:0000315"/>
    <property type="project" value="UniProtKB"/>
</dbReference>
<dbReference type="GO" id="GO:0014003">
    <property type="term" value="P:oligodendrocyte development"/>
    <property type="evidence" value="ECO:0000250"/>
    <property type="project" value="UniProtKB"/>
</dbReference>
<dbReference type="GO" id="GO:0048709">
    <property type="term" value="P:oligodendrocyte differentiation"/>
    <property type="evidence" value="ECO:0000250"/>
    <property type="project" value="UniProtKB"/>
</dbReference>
<dbReference type="GO" id="GO:0007422">
    <property type="term" value="P:peripheral nervous system development"/>
    <property type="evidence" value="ECO:0000318"/>
    <property type="project" value="GO_Central"/>
</dbReference>
<dbReference type="GO" id="GO:0045893">
    <property type="term" value="P:positive regulation of DNA-templated transcription"/>
    <property type="evidence" value="ECO:0000250"/>
    <property type="project" value="UniProtKB"/>
</dbReference>
<dbReference type="GO" id="GO:0016055">
    <property type="term" value="P:Wnt signaling pathway"/>
    <property type="evidence" value="ECO:0007669"/>
    <property type="project" value="UniProtKB-KW"/>
</dbReference>
<dbReference type="CDD" id="cd22031">
    <property type="entry name" value="HMG-box_SoxE"/>
    <property type="match status" value="1"/>
</dbReference>
<dbReference type="FunFam" id="1.10.30.10:FF:000004">
    <property type="entry name" value="Transcription factor SOX-10"/>
    <property type="match status" value="1"/>
</dbReference>
<dbReference type="Gene3D" id="1.10.30.10">
    <property type="entry name" value="High mobility group box domain"/>
    <property type="match status" value="1"/>
</dbReference>
<dbReference type="InterPro" id="IPR009071">
    <property type="entry name" value="HMG_box_dom"/>
</dbReference>
<dbReference type="InterPro" id="IPR036910">
    <property type="entry name" value="HMG_box_dom_sf"/>
</dbReference>
<dbReference type="InterPro" id="IPR022151">
    <property type="entry name" value="Sox_N"/>
</dbReference>
<dbReference type="InterPro" id="IPR050917">
    <property type="entry name" value="SOX_TF"/>
</dbReference>
<dbReference type="PANTHER" id="PTHR45803">
    <property type="entry name" value="SOX100B"/>
    <property type="match status" value="1"/>
</dbReference>
<dbReference type="PANTHER" id="PTHR45803:SF6">
    <property type="entry name" value="TRANSCRIPTION FACTOR SOX-10"/>
    <property type="match status" value="1"/>
</dbReference>
<dbReference type="Pfam" id="PF00505">
    <property type="entry name" value="HMG_box"/>
    <property type="match status" value="1"/>
</dbReference>
<dbReference type="Pfam" id="PF12444">
    <property type="entry name" value="Sox_N"/>
    <property type="match status" value="1"/>
</dbReference>
<dbReference type="SMART" id="SM00398">
    <property type="entry name" value="HMG"/>
    <property type="match status" value="1"/>
</dbReference>
<dbReference type="SUPFAM" id="SSF47095">
    <property type="entry name" value="HMG-box"/>
    <property type="match status" value="1"/>
</dbReference>
<dbReference type="PROSITE" id="PS50118">
    <property type="entry name" value="HMG_BOX_2"/>
    <property type="match status" value="1"/>
</dbReference>
<comment type="function">
    <text evidence="5 6 7">Acts early in neural crest formation, functioning redundantly with the other group E Sox factors sox8 and sox9 to induce neural crest progenitors. Acts downstream of wnt-signaling at the neural plate border. Involved in the specification of neural crest progenitors fated to form the pigment cell lineage.</text>
</comment>
<comment type="subunit">
    <text evidence="7">Interacts with the sumoylation factors ube2i/ubc9 and sumo1.</text>
</comment>
<comment type="subcellular location">
    <subcellularLocation>
        <location evidence="2">Cytoplasm</location>
    </subcellularLocation>
    <subcellularLocation>
        <location evidence="2">Nucleus</location>
    </subcellularLocation>
</comment>
<comment type="tissue specificity">
    <text evidence="5 6">First expressed at stages 13/14 at the lateral edges of the neural plate, in the neural crest forming region. By stage 22, neural crest cells migrate in the cranial region and strong expression is seen in the crest cells that populate the branchial arches as well as those migrating in the frontonasal region. Also strongly expressed in the trunk neural crest. Expression in the otic vesicle begins around stage 25 and persists until at least stage 40. At stage 30, expression is down-regulated in the cranial neural crest of the pharyngeal arches but persists in the trunk neural crest, in the otic vesicle and in discrete domains adjacent to the hindbrain. At stage 40, expression is restricted to the otic vesicle, differentiated pigment cells, and in several cranial ganglia.</text>
</comment>
<comment type="induction">
    <text evidence="5 6 8">By sox8, sox9 and snai1/snail, wnt-signaling and fgf-signaling in the neural crest-forming region.</text>
</comment>
<comment type="domain">
    <text evidence="1">The transactivation domains TAM and TAC (for transactivation domain in the middle and at the C-terminus, respectively) are required to contact transcriptional coactivators and basal transcriptional machinery components and thereby induce gene transactivation.</text>
</comment>
<comment type="PTM">
    <text evidence="7">Sumoylated.</text>
</comment>
<comment type="disruption phenotype">
    <text evidence="6">Loss of neural crest precursors. Also an increase in apoptosis and a decrease in cell proliferation in the neural fold.</text>
</comment>
<comment type="caution">
    <text evidence="9">Although PubMed:12812785 report induction by snai2/slug, PubMed:12885557 report that sox10 lies in between snai1/snail and snai2/slug in the complex sequence of inductive events required for neural crest formation.</text>
</comment>
<keyword id="KW-0963">Cytoplasm</keyword>
<keyword id="KW-0217">Developmental protein</keyword>
<keyword id="KW-0238">DNA-binding</keyword>
<keyword id="KW-1017">Isopeptide bond</keyword>
<keyword id="KW-0539">Nucleus</keyword>
<keyword id="KW-1185">Reference proteome</keyword>
<keyword id="KW-0804">Transcription</keyword>
<keyword id="KW-0805">Transcription regulation</keyword>
<keyword id="KW-0832">Ubl conjugation</keyword>
<keyword id="KW-0879">Wnt signaling pathway</keyword>
<evidence type="ECO:0000250" key="1">
    <source>
        <dbReference type="UniProtKB" id="P48436"/>
    </source>
</evidence>
<evidence type="ECO:0000250" key="2">
    <source>
        <dbReference type="UniProtKB" id="P56693"/>
    </source>
</evidence>
<evidence type="ECO:0000255" key="3">
    <source>
        <dbReference type="PROSITE-ProRule" id="PRU00267"/>
    </source>
</evidence>
<evidence type="ECO:0000256" key="4">
    <source>
        <dbReference type="SAM" id="MobiDB-lite"/>
    </source>
</evidence>
<evidence type="ECO:0000269" key="5">
    <source>
    </source>
</evidence>
<evidence type="ECO:0000269" key="6">
    <source>
    </source>
</evidence>
<evidence type="ECO:0000269" key="7">
    <source>
    </source>
</evidence>
<evidence type="ECO:0000269" key="8">
    <source>
    </source>
</evidence>
<evidence type="ECO:0000305" key="9"/>
<evidence type="ECO:0000312" key="10">
    <source>
        <dbReference type="EMBL" id="AAI70062.1"/>
    </source>
</evidence>
<evidence type="ECO:0000312" key="11">
    <source>
        <dbReference type="EMBL" id="AAN62483.1"/>
    </source>
</evidence>
<evidence type="ECO:0000312" key="12">
    <source>
        <dbReference type="EMBL" id="AAO13216.1"/>
    </source>
</evidence>
<protein>
    <recommendedName>
        <fullName evidence="11">Transcription factor Sox-10</fullName>
    </recommendedName>
    <alternativeName>
        <fullName>SRY (sex determining region Y)-box 10</fullName>
    </alternativeName>
</protein>
<sequence>MSDDQSLSEVEMSPVGSEDPSLTPDPLPPHAHSSPDDDDDDDEEEEEETKVKKEQDSEDERFPVCIREAVSQVLNGYDWTLVPMPVRVNGGSKSKPHVKRPMNAFMVWAQAARRKLADQYPHLHNAELSKTLGKLWRLLNENDKRPFIEEAERLRMQHKKDHPDYKYQPRRRKNGKPSPGEGDGSSEAEGGAASIQAHYKNSHLDHRHGSPMSDGNSEHSTGQSHGPPTPPTTPKTELQAGKSDGKRDGSHALREGGKPQIDFGNVDIGEISHDVMSNMETFDVNEFDQYLPPNGHAGHPSHIGGYTSSYGLTGALAAGPSAWALAKQHSQTVADSKAQVKTESSSTSHYTEQPSTSQLTYTSLGLPHYGSAFPSISRPQFDYADHQPSSSYYSHSAQASSLYSAFSYMGPPQRPLYTAISDPPSVAQSHSPTHWEQPVYTTLSRP</sequence>
<gene>
    <name type="primary">sox10</name>
</gene>
<name>SOX10_XENLA</name>